<proteinExistence type="inferred from homology"/>
<feature type="chain" id="PRO_0000427118" description="ESAT-6-like protein EsxQ">
    <location>
        <begin position="1"/>
        <end position="120"/>
    </location>
</feature>
<accession>P9WNJ0</accession>
<accession>L0TE29</accession>
<accession>O53264</accession>
<accession>P64091</accession>
<name>ESXQ_MYCTO</name>
<protein>
    <recommendedName>
        <fullName evidence="1">ESAT-6-like protein EsxQ</fullName>
    </recommendedName>
</protein>
<gene>
    <name evidence="1" type="primary">esxQ</name>
    <name type="ordered locus">MT3097</name>
</gene>
<reference key="1">
    <citation type="journal article" date="2002" name="J. Bacteriol.">
        <title>Whole-genome comparison of Mycobacterium tuberculosis clinical and laboratory strains.</title>
        <authorList>
            <person name="Fleischmann R.D."/>
            <person name="Alland D."/>
            <person name="Eisen J.A."/>
            <person name="Carpenter L."/>
            <person name="White O."/>
            <person name="Peterson J.D."/>
            <person name="DeBoy R.T."/>
            <person name="Dodson R.J."/>
            <person name="Gwinn M.L."/>
            <person name="Haft D.H."/>
            <person name="Hickey E.K."/>
            <person name="Kolonay J.F."/>
            <person name="Nelson W.C."/>
            <person name="Umayam L.A."/>
            <person name="Ermolaeva M.D."/>
            <person name="Salzberg S.L."/>
            <person name="Delcher A."/>
            <person name="Utterback T.R."/>
            <person name="Weidman J.F."/>
            <person name="Khouri H.M."/>
            <person name="Gill J."/>
            <person name="Mikula A."/>
            <person name="Bishai W."/>
            <person name="Jacobs W.R. Jr."/>
            <person name="Venter J.C."/>
            <person name="Fraser C.M."/>
        </authorList>
    </citation>
    <scope>NUCLEOTIDE SEQUENCE [LARGE SCALE GENOMIC DNA]</scope>
    <source>
        <strain>CDC 1551 / Oshkosh</strain>
    </source>
</reference>
<evidence type="ECO:0000250" key="1">
    <source>
        <dbReference type="UniProtKB" id="P9WNJ1"/>
    </source>
</evidence>
<evidence type="ECO:0000305" key="2"/>
<organism>
    <name type="scientific">Mycobacterium tuberculosis (strain CDC 1551 / Oshkosh)</name>
    <dbReference type="NCBI Taxonomy" id="83331"/>
    <lineage>
        <taxon>Bacteria</taxon>
        <taxon>Bacillati</taxon>
        <taxon>Actinomycetota</taxon>
        <taxon>Actinomycetes</taxon>
        <taxon>Mycobacteriales</taxon>
        <taxon>Mycobacteriaceae</taxon>
        <taxon>Mycobacterium</taxon>
        <taxon>Mycobacterium tuberculosis complex</taxon>
    </lineage>
</organism>
<keyword id="KW-1185">Reference proteome</keyword>
<keyword id="KW-0964">Secreted</keyword>
<sequence length="120" mass="12954">MSQSMYSYPAMTANVGDMAGYTGTTQSLGADIASERTAPSRACQGDLGMSHQDWQAQWNQAMEALARAYRRCRRALRQIGVLERPVGDSSDCGTIRVGSFRGRWLDPRHAGPATAADAGD</sequence>
<dbReference type="EMBL" id="AE000516">
    <property type="protein sequence ID" value="AAK47426.1"/>
    <property type="status" value="ALT_INIT"/>
    <property type="molecule type" value="Genomic_DNA"/>
</dbReference>
<dbReference type="PIR" id="D70857">
    <property type="entry name" value="D70857"/>
</dbReference>
<dbReference type="RefSeq" id="WP_003415272.1">
    <property type="nucleotide sequence ID" value="NZ_KK341227.1"/>
</dbReference>
<dbReference type="SMR" id="P9WNJ0"/>
<dbReference type="GeneID" id="45427007"/>
<dbReference type="KEGG" id="mtc:MT3097"/>
<dbReference type="PATRIC" id="fig|83331.31.peg.3338"/>
<dbReference type="HOGENOM" id="CLU_165452_0_0_11"/>
<dbReference type="Proteomes" id="UP000001020">
    <property type="component" value="Chromosome"/>
</dbReference>
<dbReference type="GO" id="GO:0005576">
    <property type="term" value="C:extracellular region"/>
    <property type="evidence" value="ECO:0007669"/>
    <property type="project" value="UniProtKB-SubCell"/>
</dbReference>
<dbReference type="Gene3D" id="1.10.287.1060">
    <property type="entry name" value="ESAT-6-like"/>
    <property type="match status" value="1"/>
</dbReference>
<dbReference type="InterPro" id="IPR036689">
    <property type="entry name" value="ESAT-6-like_sf"/>
</dbReference>
<dbReference type="SUPFAM" id="SSF140453">
    <property type="entry name" value="EsxAB dimer-like"/>
    <property type="match status" value="1"/>
</dbReference>
<comment type="subcellular location">
    <subcellularLocation>
        <location evidence="1">Secreted</location>
    </subcellularLocation>
    <text evidence="1">Probably secreted via the ESX-3 / type VII secretion system (T7SS).</text>
</comment>
<comment type="similarity">
    <text evidence="2">Belongs to the WXG100 family. ESAT-6 subfamily.</text>
</comment>
<comment type="sequence caution" evidence="2">
    <conflict type="erroneous initiation">
        <sequence resource="EMBL-CDS" id="AAK47426"/>
    </conflict>
</comment>